<feature type="initiator methionine" description="Removed" evidence="1">
    <location>
        <position position="1"/>
    </location>
</feature>
<feature type="chain" id="PRO_0000125354" description="Kinesin heavy chain isoform 5A">
    <location>
        <begin position="2"/>
        <end position="1027"/>
    </location>
</feature>
<feature type="domain" description="Kinesin motor" evidence="3">
    <location>
        <begin position="9"/>
        <end position="327"/>
    </location>
</feature>
<feature type="region of interest" description="Microtubule-binding">
    <location>
        <begin position="174"/>
        <end position="315"/>
    </location>
</feature>
<feature type="region of interest" description="Necessary for interaction with ZFYVE27" evidence="9">
    <location>
        <begin position="271"/>
        <end position="361"/>
    </location>
</feature>
<feature type="region of interest" description="Interaction with BICD2" evidence="1">
    <location>
        <begin position="353"/>
        <end position="1027"/>
    </location>
</feature>
<feature type="region of interest" description="Disordered" evidence="4">
    <location>
        <begin position="906"/>
        <end position="937"/>
    </location>
</feature>
<feature type="region of interest" description="Globular">
    <location>
        <begin position="907"/>
        <end position="1027"/>
    </location>
</feature>
<feature type="coiled-coil region">
    <location>
        <begin position="331"/>
        <end position="906"/>
    </location>
</feature>
<feature type="binding site" evidence="3">
    <location>
        <begin position="86"/>
        <end position="93"/>
    </location>
    <ligand>
        <name>ATP</name>
        <dbReference type="ChEBI" id="CHEBI:30616"/>
    </ligand>
</feature>
<feature type="modified residue" description="N-acetylalanine" evidence="1">
    <location>
        <position position="2"/>
    </location>
</feature>
<feature type="modified residue" description="Phosphothreonine" evidence="12">
    <location>
        <position position="397"/>
    </location>
</feature>
<feature type="mutagenesis site" description="Loss of ability to induce formation of neurite-like membrane protrusions in non-neuronal cells." evidence="9">
    <original>T</original>
    <variation>N</variation>
    <location>
        <position position="93"/>
    </location>
</feature>
<feature type="sequence conflict" description="In Ref. 5." evidence="11" ref="5">
    <original>L</original>
    <variation>P</variation>
    <location>
        <position position="146"/>
    </location>
</feature>
<feature type="sequence conflict" description="In Ref. 1; AAC79803." evidence="11" ref="1">
    <original>S</original>
    <variation>T</variation>
    <location>
        <position position="282"/>
    </location>
</feature>
<feature type="sequence conflict" description="In Ref. 1; AAC79803." evidence="11" ref="1">
    <original>KL</original>
    <variation>NV</variation>
    <location>
        <begin position="362"/>
        <end position="363"/>
    </location>
</feature>
<feature type="sequence conflict" description="In Ref. 3; BAD90503." evidence="11" ref="3">
    <original>T</original>
    <variation>I</variation>
    <location>
        <position position="727"/>
    </location>
</feature>
<feature type="sequence conflict" description="In Ref. 1; AAC79803." evidence="11" ref="1">
    <original>A</original>
    <variation>R</variation>
    <location>
        <position position="976"/>
    </location>
</feature>
<proteinExistence type="evidence at protein level"/>
<organism>
    <name type="scientific">Mus musculus</name>
    <name type="common">Mouse</name>
    <dbReference type="NCBI Taxonomy" id="10090"/>
    <lineage>
        <taxon>Eukaryota</taxon>
        <taxon>Metazoa</taxon>
        <taxon>Chordata</taxon>
        <taxon>Craniata</taxon>
        <taxon>Vertebrata</taxon>
        <taxon>Euteleostomi</taxon>
        <taxon>Mammalia</taxon>
        <taxon>Eutheria</taxon>
        <taxon>Euarchontoglires</taxon>
        <taxon>Glires</taxon>
        <taxon>Rodentia</taxon>
        <taxon>Myomorpha</taxon>
        <taxon>Muroidea</taxon>
        <taxon>Muridae</taxon>
        <taxon>Murinae</taxon>
        <taxon>Mus</taxon>
        <taxon>Mus</taxon>
    </lineage>
</organism>
<dbReference type="EC" id="5.6.1.3" evidence="1"/>
<dbReference type="EMBL" id="AF067179">
    <property type="protein sequence ID" value="AAC79803.1"/>
    <property type="molecule type" value="mRNA"/>
</dbReference>
<dbReference type="EMBL" id="AK147352">
    <property type="protein sequence ID" value="BAE27862.1"/>
    <property type="molecule type" value="mRNA"/>
</dbReference>
<dbReference type="EMBL" id="AK147660">
    <property type="protein sequence ID" value="BAE28054.1"/>
    <property type="molecule type" value="mRNA"/>
</dbReference>
<dbReference type="EMBL" id="AK147707">
    <property type="protein sequence ID" value="BAE28087.1"/>
    <property type="molecule type" value="mRNA"/>
</dbReference>
<dbReference type="EMBL" id="AK220479">
    <property type="protein sequence ID" value="BAD90503.1"/>
    <property type="status" value="ALT_INIT"/>
    <property type="molecule type" value="mRNA"/>
</dbReference>
<dbReference type="EMBL" id="BC058396">
    <property type="protein sequence ID" value="AAH58396.1"/>
    <property type="molecule type" value="mRNA"/>
</dbReference>
<dbReference type="CCDS" id="CCDS24233.1"/>
<dbReference type="PIR" id="C44259">
    <property type="entry name" value="C44259"/>
</dbReference>
<dbReference type="RefSeq" id="NP_001034089.1">
    <property type="nucleotide sequence ID" value="NM_001039000.4"/>
</dbReference>
<dbReference type="RefSeq" id="NP_032473.2">
    <property type="nucleotide sequence ID" value="NM_008447.4"/>
</dbReference>
<dbReference type="RefSeq" id="XP_030100779.1">
    <property type="nucleotide sequence ID" value="XM_030244919.1"/>
</dbReference>
<dbReference type="SMR" id="P33175"/>
<dbReference type="BioGRID" id="200945">
    <property type="interactions" value="22"/>
</dbReference>
<dbReference type="CORUM" id="P33175"/>
<dbReference type="FunCoup" id="P33175">
    <property type="interactions" value="662"/>
</dbReference>
<dbReference type="IntAct" id="P33175">
    <property type="interactions" value="12"/>
</dbReference>
<dbReference type="MINT" id="P33175"/>
<dbReference type="STRING" id="10090.ENSMUSP00000096775"/>
<dbReference type="GlyGen" id="P33175">
    <property type="glycosylation" value="1 site, 1 N-linked glycan (1 site)"/>
</dbReference>
<dbReference type="iPTMnet" id="P33175"/>
<dbReference type="PhosphoSitePlus" id="P33175"/>
<dbReference type="SwissPalm" id="P33175"/>
<dbReference type="jPOST" id="P33175"/>
<dbReference type="PaxDb" id="10090-ENSMUSP00000096775"/>
<dbReference type="PeptideAtlas" id="P33175"/>
<dbReference type="ProteomicsDB" id="263539"/>
<dbReference type="Antibodypedia" id="1390">
    <property type="antibodies" value="264 antibodies from 37 providers"/>
</dbReference>
<dbReference type="DNASU" id="16572"/>
<dbReference type="Ensembl" id="ENSMUST00000099172.5">
    <property type="protein sequence ID" value="ENSMUSP00000096775.4"/>
    <property type="gene ID" value="ENSMUSG00000074657.6"/>
</dbReference>
<dbReference type="Ensembl" id="ENSMUST00000217895.2">
    <property type="protein sequence ID" value="ENSMUSP00000151402.2"/>
    <property type="gene ID" value="ENSMUSG00000074657.6"/>
</dbReference>
<dbReference type="GeneID" id="16572"/>
<dbReference type="KEGG" id="mmu:16572"/>
<dbReference type="UCSC" id="uc007his.2">
    <property type="organism name" value="mouse"/>
</dbReference>
<dbReference type="AGR" id="MGI:109564"/>
<dbReference type="CTD" id="3798"/>
<dbReference type="MGI" id="MGI:109564">
    <property type="gene designation" value="Kif5a"/>
</dbReference>
<dbReference type="VEuPathDB" id="HostDB:ENSMUSG00000074657"/>
<dbReference type="eggNOG" id="KOG0240">
    <property type="taxonomic scope" value="Eukaryota"/>
</dbReference>
<dbReference type="GeneTree" id="ENSGT00940000159439"/>
<dbReference type="HOGENOM" id="CLU_001485_11_1_1"/>
<dbReference type="InParanoid" id="P33175"/>
<dbReference type="OMA" id="DSKSREC"/>
<dbReference type="OrthoDB" id="3176171at2759"/>
<dbReference type="PhylomeDB" id="P33175"/>
<dbReference type="TreeFam" id="TF105225"/>
<dbReference type="Reactome" id="R-MMU-2132295">
    <property type="pathway name" value="MHC class II antigen presentation"/>
</dbReference>
<dbReference type="Reactome" id="R-MMU-5625970">
    <property type="pathway name" value="RHO GTPases activate KTN1"/>
</dbReference>
<dbReference type="Reactome" id="R-MMU-6811434">
    <property type="pathway name" value="COPI-dependent Golgi-to-ER retrograde traffic"/>
</dbReference>
<dbReference type="Reactome" id="R-MMU-983189">
    <property type="pathway name" value="Kinesins"/>
</dbReference>
<dbReference type="BioGRID-ORCS" id="16572">
    <property type="hits" value="8 hits in 77 CRISPR screens"/>
</dbReference>
<dbReference type="CD-CODE" id="CE726F99">
    <property type="entry name" value="Postsynaptic density"/>
</dbReference>
<dbReference type="ChiTaRS" id="Kif5a">
    <property type="organism name" value="mouse"/>
</dbReference>
<dbReference type="PRO" id="PR:P33175"/>
<dbReference type="Proteomes" id="UP000000589">
    <property type="component" value="Chromosome 10"/>
</dbReference>
<dbReference type="RNAct" id="P33175">
    <property type="molecule type" value="protein"/>
</dbReference>
<dbReference type="Bgee" id="ENSMUSG00000074657">
    <property type="expression patterns" value="Expressed in globus pallidus and 168 other cell types or tissues"/>
</dbReference>
<dbReference type="ExpressionAtlas" id="P33175">
    <property type="expression patterns" value="baseline and differential"/>
</dbReference>
<dbReference type="GO" id="GO:1904115">
    <property type="term" value="C:axon cytoplasm"/>
    <property type="evidence" value="ECO:0007669"/>
    <property type="project" value="GOC"/>
</dbReference>
<dbReference type="GO" id="GO:0035253">
    <property type="term" value="C:ciliary rootlet"/>
    <property type="evidence" value="ECO:0000314"/>
    <property type="project" value="MGI"/>
</dbReference>
<dbReference type="GO" id="GO:0005737">
    <property type="term" value="C:cytoplasm"/>
    <property type="evidence" value="ECO:0000314"/>
    <property type="project" value="MGI"/>
</dbReference>
<dbReference type="GO" id="GO:0032839">
    <property type="term" value="C:dendrite cytoplasm"/>
    <property type="evidence" value="ECO:0007669"/>
    <property type="project" value="GOC"/>
</dbReference>
<dbReference type="GO" id="GO:0005871">
    <property type="term" value="C:kinesin complex"/>
    <property type="evidence" value="ECO:0000304"/>
    <property type="project" value="MGI"/>
</dbReference>
<dbReference type="GO" id="GO:0005874">
    <property type="term" value="C:microtubule"/>
    <property type="evidence" value="ECO:0007669"/>
    <property type="project" value="UniProtKB-KW"/>
</dbReference>
<dbReference type="GO" id="GO:0043005">
    <property type="term" value="C:neuron projection"/>
    <property type="evidence" value="ECO:0000314"/>
    <property type="project" value="MGI"/>
</dbReference>
<dbReference type="GO" id="GO:0043025">
    <property type="term" value="C:neuronal cell body"/>
    <property type="evidence" value="ECO:0000314"/>
    <property type="project" value="MGI"/>
</dbReference>
<dbReference type="GO" id="GO:0043204">
    <property type="term" value="C:perikaryon"/>
    <property type="evidence" value="ECO:0007669"/>
    <property type="project" value="UniProtKB-SubCell"/>
</dbReference>
<dbReference type="GO" id="GO:0048471">
    <property type="term" value="C:perinuclear region of cytoplasm"/>
    <property type="evidence" value="ECO:0007669"/>
    <property type="project" value="UniProtKB-SubCell"/>
</dbReference>
<dbReference type="GO" id="GO:0099524">
    <property type="term" value="C:postsynaptic cytosol"/>
    <property type="evidence" value="ECO:0000314"/>
    <property type="project" value="SynGO"/>
</dbReference>
<dbReference type="GO" id="GO:0005524">
    <property type="term" value="F:ATP binding"/>
    <property type="evidence" value="ECO:0007669"/>
    <property type="project" value="UniProtKB-KW"/>
</dbReference>
<dbReference type="GO" id="GO:0019894">
    <property type="term" value="F:kinesin binding"/>
    <property type="evidence" value="ECO:0000353"/>
    <property type="project" value="UniProtKB"/>
</dbReference>
<dbReference type="GO" id="GO:0008017">
    <property type="term" value="F:microtubule binding"/>
    <property type="evidence" value="ECO:0000314"/>
    <property type="project" value="MGI"/>
</dbReference>
<dbReference type="GO" id="GO:0003777">
    <property type="term" value="F:microtubule motor activity"/>
    <property type="evidence" value="ECO:0000250"/>
    <property type="project" value="UniProtKB"/>
</dbReference>
<dbReference type="GO" id="GO:0099641">
    <property type="term" value="P:anterograde axonal protein transport"/>
    <property type="evidence" value="ECO:0000250"/>
    <property type="project" value="UniProtKB"/>
</dbReference>
<dbReference type="GO" id="GO:0098971">
    <property type="term" value="P:anterograde dendritic transport of neurotransmitter receptor complex"/>
    <property type="evidence" value="ECO:0000314"/>
    <property type="project" value="SynGO"/>
</dbReference>
<dbReference type="GO" id="GO:0016192">
    <property type="term" value="P:vesicle-mediated transport"/>
    <property type="evidence" value="ECO:0000314"/>
    <property type="project" value="UniProtKB"/>
</dbReference>
<dbReference type="CDD" id="cd23649">
    <property type="entry name" value="Khc_CBD_cc"/>
    <property type="match status" value="1"/>
</dbReference>
<dbReference type="CDD" id="cd01369">
    <property type="entry name" value="KISc_KHC_KIF5"/>
    <property type="match status" value="1"/>
</dbReference>
<dbReference type="FunFam" id="3.40.850.10:FF:000009">
    <property type="entry name" value="Kinesin-like protein"/>
    <property type="match status" value="1"/>
</dbReference>
<dbReference type="Gene3D" id="6.10.250.1590">
    <property type="match status" value="1"/>
</dbReference>
<dbReference type="Gene3D" id="3.40.850.10">
    <property type="entry name" value="Kinesin motor domain"/>
    <property type="match status" value="1"/>
</dbReference>
<dbReference type="InterPro" id="IPR027640">
    <property type="entry name" value="Kinesin-like_fam"/>
</dbReference>
<dbReference type="InterPro" id="IPR019821">
    <property type="entry name" value="Kinesin_motor_CS"/>
</dbReference>
<dbReference type="InterPro" id="IPR001752">
    <property type="entry name" value="Kinesin_motor_dom"/>
</dbReference>
<dbReference type="InterPro" id="IPR036961">
    <property type="entry name" value="Kinesin_motor_dom_sf"/>
</dbReference>
<dbReference type="InterPro" id="IPR027417">
    <property type="entry name" value="P-loop_NTPase"/>
</dbReference>
<dbReference type="PANTHER" id="PTHR47968">
    <property type="entry name" value="CENTROMERE PROTEIN E"/>
    <property type="match status" value="1"/>
</dbReference>
<dbReference type="PANTHER" id="PTHR47968:SF62">
    <property type="entry name" value="KINESIN FAMILY MEMBER 5A"/>
    <property type="match status" value="1"/>
</dbReference>
<dbReference type="Pfam" id="PF00225">
    <property type="entry name" value="Kinesin"/>
    <property type="match status" value="1"/>
</dbReference>
<dbReference type="PRINTS" id="PR00380">
    <property type="entry name" value="KINESINHEAVY"/>
</dbReference>
<dbReference type="SMART" id="SM00129">
    <property type="entry name" value="KISc"/>
    <property type="match status" value="1"/>
</dbReference>
<dbReference type="SUPFAM" id="SSF52540">
    <property type="entry name" value="P-loop containing nucleoside triphosphate hydrolases"/>
    <property type="match status" value="1"/>
</dbReference>
<dbReference type="PROSITE" id="PS00411">
    <property type="entry name" value="KINESIN_MOTOR_1"/>
    <property type="match status" value="1"/>
</dbReference>
<dbReference type="PROSITE" id="PS50067">
    <property type="entry name" value="KINESIN_MOTOR_2"/>
    <property type="match status" value="1"/>
</dbReference>
<comment type="function">
    <text evidence="2 6 9">Microtubule-dependent motor required for slow axonal transport of neurofilament proteins (NFH, NFM and NFL) (PubMed:12682084). Can induce formation of neurite-like membrane protrusions in non-neuronal cells in a ZFYVE27-dependent manner. The ZFYVE27-KIF5A complex contributes to the vesicular transport of VAPA, VAPB, SURF4, RAB11A, RAB11B and RTN3 proteins in neurons (PubMed:21976701). Required for anterograde axonal transportation of MAPK8IP3/JIP3 which is essential for MAPK8IP3/JIP3 function in axon elongation (By similarity).</text>
</comment>
<comment type="catalytic activity">
    <reaction evidence="1">
        <text>ATP + H2O + a kinesin associated with a microtubule at position (n) = ADP + phosphate a kinesin associated with a microtubule at position (n+1, toward the plus end).</text>
        <dbReference type="EC" id="5.6.1.3"/>
    </reaction>
</comment>
<comment type="subunit">
    <text evidence="1 5 7 8 9 10">Oligomer composed of two heavy chains and two light chains. Interacts with GRIP1 (PubMed:11986669). Interacts with FMR1 (via C-terminus); this interaction is increased in a mGluR-dependent manner (PubMed:18539120). Interacts with BORCS5 (By similarity). Interacts with ZFYVE27 (PubMed:21976701, PubMed:24251978). Interacts with VAPA, VAPB, SURF4, RAB11A (GDP-bound form), RAB11B (GDP-bound form) and RTN3 in a ZFYVE27-dependent manner (PubMed:21976701). Interacts with BICD2 (By similarity). Interacts with DTNB (PubMed:14600269).</text>
</comment>
<comment type="interaction">
    <interactant intactId="EBI-349710">
        <id>P33175</id>
    </interactant>
    <interactant intactId="EBI-776180">
        <id>O08788</id>
        <label>Dctn1</label>
    </interactant>
    <organismsDiffer>false</organismsDiffer>
    <experiments>2</experiments>
</comment>
<comment type="interaction">
    <interactant intactId="EBI-349710">
        <id>P33175</id>
    </interactant>
    <interactant intactId="EBI-349714">
        <id>O70585</id>
        <label>Dtnb</label>
    </interactant>
    <organismsDiffer>false</organismsDiffer>
    <experiments>4</experiments>
</comment>
<comment type="interaction">
    <interactant intactId="EBI-349710">
        <id>P33175</id>
    </interactant>
    <interactant intactId="EBI-6125599">
        <id>Q96NW4</id>
        <label>ANKRD27</label>
    </interactant>
    <organismsDiffer>true</organismsDiffer>
    <experiments>2</experiments>
</comment>
<comment type="subcellular location">
    <subcellularLocation>
        <location evidence="2">Cytoplasm</location>
        <location evidence="2">Perinuclear region</location>
    </subcellularLocation>
    <subcellularLocation>
        <location evidence="2">Cytoplasm</location>
        <location evidence="2">Cytoskeleton</location>
    </subcellularLocation>
    <subcellularLocation>
        <location evidence="2">Perikaryon</location>
    </subcellularLocation>
    <text evidence="2">Concentrated in the cell body of the neurons, particularly in the perinuclear region.</text>
</comment>
<comment type="domain">
    <text>Composed of three structural domains: a large globular N-terminal domain which is responsible for the motor activity of kinesin (it hydrolyzes ATP and binds microtubule), a central alpha-helical coiled coil domain that mediates the heavy chain dimerization; and a small globular C-terminal domain which interacts with other proteins (such as the kinesin light chains), vesicles and membranous organelles.</text>
</comment>
<comment type="disruption phenotype">
    <text evidence="6">Death shortly after birth. Neuron-specific deletion within the first 3 weeks after birth is lethal in 75% of animals. Surviving animals show accumulation of neurofilament proteins in neuronal soma, age-dependent sensory neuron degeneration, loss of large caliber axons, and hind limb paralysis with a stronger effect on sensory neurons compared with motor neurons.</text>
</comment>
<comment type="similarity">
    <text evidence="3">Belongs to the TRAFAC class myosin-kinesin ATPase superfamily. Kinesin family. Kinesin subfamily.</text>
</comment>
<comment type="sequence caution" evidence="11">
    <conflict type="erroneous initiation">
        <sequence resource="EMBL-CDS" id="BAD90503"/>
    </conflict>
    <text>Extended N-terminus.</text>
</comment>
<accession>P33175</accession>
<accession>Q5DTP1</accession>
<accession>Q6PDY7</accession>
<accession>Q9Z2F9</accession>
<gene>
    <name type="primary">Kif5a</name>
    <name type="synonym">Kiaa4086</name>
    <name type="synonym">Kif5</name>
    <name type="synonym">Nkhc1</name>
</gene>
<reference key="1">
    <citation type="journal article" date="1998" name="Genomics">
        <title>Chromosomal localization reveals three kinesin heavy chain genes in mouse.</title>
        <authorList>
            <person name="Xia C."/>
            <person name="Rahman A."/>
            <person name="Yang Z."/>
            <person name="Goldstein L.S.B."/>
        </authorList>
    </citation>
    <scope>NUCLEOTIDE SEQUENCE [MRNA]</scope>
    <source>
        <tissue>Brain</tissue>
    </source>
</reference>
<reference key="2">
    <citation type="journal article" date="2005" name="Science">
        <title>The transcriptional landscape of the mammalian genome.</title>
        <authorList>
            <person name="Carninci P."/>
            <person name="Kasukawa T."/>
            <person name="Katayama S."/>
            <person name="Gough J."/>
            <person name="Frith M.C."/>
            <person name="Maeda N."/>
            <person name="Oyama R."/>
            <person name="Ravasi T."/>
            <person name="Lenhard B."/>
            <person name="Wells C."/>
            <person name="Kodzius R."/>
            <person name="Shimokawa K."/>
            <person name="Bajic V.B."/>
            <person name="Brenner S.E."/>
            <person name="Batalov S."/>
            <person name="Forrest A.R."/>
            <person name="Zavolan M."/>
            <person name="Davis M.J."/>
            <person name="Wilming L.G."/>
            <person name="Aidinis V."/>
            <person name="Allen J.E."/>
            <person name="Ambesi-Impiombato A."/>
            <person name="Apweiler R."/>
            <person name="Aturaliya R.N."/>
            <person name="Bailey T.L."/>
            <person name="Bansal M."/>
            <person name="Baxter L."/>
            <person name="Beisel K.W."/>
            <person name="Bersano T."/>
            <person name="Bono H."/>
            <person name="Chalk A.M."/>
            <person name="Chiu K.P."/>
            <person name="Choudhary V."/>
            <person name="Christoffels A."/>
            <person name="Clutterbuck D.R."/>
            <person name="Crowe M.L."/>
            <person name="Dalla E."/>
            <person name="Dalrymple B.P."/>
            <person name="de Bono B."/>
            <person name="Della Gatta G."/>
            <person name="di Bernardo D."/>
            <person name="Down T."/>
            <person name="Engstrom P."/>
            <person name="Fagiolini M."/>
            <person name="Faulkner G."/>
            <person name="Fletcher C.F."/>
            <person name="Fukushima T."/>
            <person name="Furuno M."/>
            <person name="Futaki S."/>
            <person name="Gariboldi M."/>
            <person name="Georgii-Hemming P."/>
            <person name="Gingeras T.R."/>
            <person name="Gojobori T."/>
            <person name="Green R.E."/>
            <person name="Gustincich S."/>
            <person name="Harbers M."/>
            <person name="Hayashi Y."/>
            <person name="Hensch T.K."/>
            <person name="Hirokawa N."/>
            <person name="Hill D."/>
            <person name="Huminiecki L."/>
            <person name="Iacono M."/>
            <person name="Ikeo K."/>
            <person name="Iwama A."/>
            <person name="Ishikawa T."/>
            <person name="Jakt M."/>
            <person name="Kanapin A."/>
            <person name="Katoh M."/>
            <person name="Kawasawa Y."/>
            <person name="Kelso J."/>
            <person name="Kitamura H."/>
            <person name="Kitano H."/>
            <person name="Kollias G."/>
            <person name="Krishnan S.P."/>
            <person name="Kruger A."/>
            <person name="Kummerfeld S.K."/>
            <person name="Kurochkin I.V."/>
            <person name="Lareau L.F."/>
            <person name="Lazarevic D."/>
            <person name="Lipovich L."/>
            <person name="Liu J."/>
            <person name="Liuni S."/>
            <person name="McWilliam S."/>
            <person name="Madan Babu M."/>
            <person name="Madera M."/>
            <person name="Marchionni L."/>
            <person name="Matsuda H."/>
            <person name="Matsuzawa S."/>
            <person name="Miki H."/>
            <person name="Mignone F."/>
            <person name="Miyake S."/>
            <person name="Morris K."/>
            <person name="Mottagui-Tabar S."/>
            <person name="Mulder N."/>
            <person name="Nakano N."/>
            <person name="Nakauchi H."/>
            <person name="Ng P."/>
            <person name="Nilsson R."/>
            <person name="Nishiguchi S."/>
            <person name="Nishikawa S."/>
            <person name="Nori F."/>
            <person name="Ohara O."/>
            <person name="Okazaki Y."/>
            <person name="Orlando V."/>
            <person name="Pang K.C."/>
            <person name="Pavan W.J."/>
            <person name="Pavesi G."/>
            <person name="Pesole G."/>
            <person name="Petrovsky N."/>
            <person name="Piazza S."/>
            <person name="Reed J."/>
            <person name="Reid J.F."/>
            <person name="Ring B.Z."/>
            <person name="Ringwald M."/>
            <person name="Rost B."/>
            <person name="Ruan Y."/>
            <person name="Salzberg S.L."/>
            <person name="Sandelin A."/>
            <person name="Schneider C."/>
            <person name="Schoenbach C."/>
            <person name="Sekiguchi K."/>
            <person name="Semple C.A."/>
            <person name="Seno S."/>
            <person name="Sessa L."/>
            <person name="Sheng Y."/>
            <person name="Shibata Y."/>
            <person name="Shimada H."/>
            <person name="Shimada K."/>
            <person name="Silva D."/>
            <person name="Sinclair B."/>
            <person name="Sperling S."/>
            <person name="Stupka E."/>
            <person name="Sugiura K."/>
            <person name="Sultana R."/>
            <person name="Takenaka Y."/>
            <person name="Taki K."/>
            <person name="Tammoja K."/>
            <person name="Tan S.L."/>
            <person name="Tang S."/>
            <person name="Taylor M.S."/>
            <person name="Tegner J."/>
            <person name="Teichmann S.A."/>
            <person name="Ueda H.R."/>
            <person name="van Nimwegen E."/>
            <person name="Verardo R."/>
            <person name="Wei C.L."/>
            <person name="Yagi K."/>
            <person name="Yamanishi H."/>
            <person name="Zabarovsky E."/>
            <person name="Zhu S."/>
            <person name="Zimmer A."/>
            <person name="Hide W."/>
            <person name="Bult C."/>
            <person name="Grimmond S.M."/>
            <person name="Teasdale R.D."/>
            <person name="Liu E.T."/>
            <person name="Brusic V."/>
            <person name="Quackenbush J."/>
            <person name="Wahlestedt C."/>
            <person name="Mattick J.S."/>
            <person name="Hume D.A."/>
            <person name="Kai C."/>
            <person name="Sasaki D."/>
            <person name="Tomaru Y."/>
            <person name="Fukuda S."/>
            <person name="Kanamori-Katayama M."/>
            <person name="Suzuki M."/>
            <person name="Aoki J."/>
            <person name="Arakawa T."/>
            <person name="Iida J."/>
            <person name="Imamura K."/>
            <person name="Itoh M."/>
            <person name="Kato T."/>
            <person name="Kawaji H."/>
            <person name="Kawagashira N."/>
            <person name="Kawashima T."/>
            <person name="Kojima M."/>
            <person name="Kondo S."/>
            <person name="Konno H."/>
            <person name="Nakano K."/>
            <person name="Ninomiya N."/>
            <person name="Nishio T."/>
            <person name="Okada M."/>
            <person name="Plessy C."/>
            <person name="Shibata K."/>
            <person name="Shiraki T."/>
            <person name="Suzuki S."/>
            <person name="Tagami M."/>
            <person name="Waki K."/>
            <person name="Watahiki A."/>
            <person name="Okamura-Oho Y."/>
            <person name="Suzuki H."/>
            <person name="Kawai J."/>
            <person name="Hayashizaki Y."/>
        </authorList>
    </citation>
    <scope>NUCLEOTIDE SEQUENCE [LARGE SCALE MRNA]</scope>
    <source>
        <strain>C57BL/6J</strain>
        <tissue>Brain</tissue>
    </source>
</reference>
<reference key="3">
    <citation type="submission" date="2005-02" db="EMBL/GenBank/DDBJ databases">
        <title>Prediction of the coding sequences of mouse homologues of KIAA gene. The complete nucleotide sequences of mouse KIAA-homologous cDNAs identified by screening of terminal sequences of cDNA clones randomly sampled from size-fractionated libraries.</title>
        <authorList>
            <person name="Okazaki N."/>
            <person name="Kikuno R.F."/>
            <person name="Ohara R."/>
            <person name="Inamoto S."/>
            <person name="Nagase T."/>
            <person name="Ohara O."/>
            <person name="Koga H."/>
        </authorList>
    </citation>
    <scope>NUCLEOTIDE SEQUENCE [LARGE SCALE MRNA]</scope>
    <source>
        <tissue>Fetal brain</tissue>
    </source>
</reference>
<reference key="4">
    <citation type="journal article" date="2004" name="Genome Res.">
        <title>The status, quality, and expansion of the NIH full-length cDNA project: the Mammalian Gene Collection (MGC).</title>
        <authorList>
            <consortium name="The MGC Project Team"/>
        </authorList>
    </citation>
    <scope>NUCLEOTIDE SEQUENCE [LARGE SCALE MRNA]</scope>
    <source>
        <strain>C57BL/6J</strain>
        <tissue>Brain</tissue>
    </source>
</reference>
<reference key="5">
    <citation type="journal article" date="1992" name="J. Cell Biol.">
        <title>Kinesin family in murine central nervous system.</title>
        <authorList>
            <person name="Aizawa H."/>
            <person name="Sekine Y."/>
            <person name="Takemura R."/>
            <person name="Zhang Z."/>
            <person name="Nangaku M."/>
            <person name="Hirokawa N."/>
        </authorList>
    </citation>
    <scope>NUCLEOTIDE SEQUENCE [MRNA] OF 89-237</scope>
    <source>
        <tissue>Brain</tissue>
    </source>
</reference>
<reference key="6">
    <citation type="journal article" date="2002" name="Nature">
        <title>Glutamate-receptor-interacting protein GRIP1 directly steers kinesin to dendrites.</title>
        <authorList>
            <person name="Setou M."/>
            <person name="Seog D.-H."/>
            <person name="Tanaka Y."/>
            <person name="Kanai Y."/>
            <person name="Takei Y."/>
            <person name="Kawagishi M."/>
            <person name="Hirokawa N."/>
        </authorList>
    </citation>
    <scope>INTERACTION WITH GRIP1</scope>
</reference>
<reference key="7">
    <citation type="journal article" date="2003" name="J. Cell Sci.">
        <title>Beta-dystrobrevin interacts directly with kinesin heavy chain in brain.</title>
        <authorList>
            <person name="Macioce P."/>
            <person name="Gambara G."/>
            <person name="Bernassola M."/>
            <person name="Gaddini L."/>
            <person name="Torreri P."/>
            <person name="Macchia G."/>
            <person name="Ramoni C."/>
            <person name="Ceccarini M."/>
            <person name="Petrucci T.C."/>
        </authorList>
    </citation>
    <scope>INTERACTION WITH DTNB</scope>
</reference>
<reference key="8">
    <citation type="journal article" date="2003" name="J. Cell Biol.">
        <title>Abnormal neurofilament transport caused by targeted disruption of neuronal kinesin heavy chain KIF5A.</title>
        <authorList>
            <person name="Xia C.H."/>
            <person name="Roberts E.A."/>
            <person name="Her L.S."/>
            <person name="Liu X."/>
            <person name="Williams D.S."/>
            <person name="Cleveland D.W."/>
            <person name="Goldstein L.S."/>
        </authorList>
    </citation>
    <scope>FUNCTION</scope>
    <scope>DISRUPTION PHENOTYPE</scope>
</reference>
<reference key="9">
    <citation type="journal article" date="2008" name="Dev. Cell">
        <title>A direct role for FMRP in activity-dependent dendritic mRNA transport links filopodial-spine morphogenesis to fragile X syndrome.</title>
        <authorList>
            <person name="Dictenberg J.B."/>
            <person name="Swanger S.A."/>
            <person name="Antar L.N."/>
            <person name="Singer R.H."/>
            <person name="Bassell G.J."/>
        </authorList>
    </citation>
    <scope>INTERACTION WITH FMR1</scope>
</reference>
<reference key="10">
    <citation type="journal article" date="2010" name="Cell">
        <title>A tissue-specific atlas of mouse protein phosphorylation and expression.</title>
        <authorList>
            <person name="Huttlin E.L."/>
            <person name="Jedrychowski M.P."/>
            <person name="Elias J.E."/>
            <person name="Goswami T."/>
            <person name="Rad R."/>
            <person name="Beausoleil S.A."/>
            <person name="Villen J."/>
            <person name="Haas W."/>
            <person name="Sowa M.E."/>
            <person name="Gygi S.P."/>
        </authorList>
    </citation>
    <scope>PHOSPHORYLATION [LARGE SCALE ANALYSIS] AT THR-397</scope>
    <scope>IDENTIFICATION BY MASS SPECTROMETRY [LARGE SCALE ANALYSIS]</scope>
    <source>
        <tissue>Brain</tissue>
    </source>
</reference>
<reference key="11">
    <citation type="journal article" date="2011" name="Mol. Biol. Cell">
        <title>Protrudin serves as an adaptor molecule that connects KIF5 and its cargoes in vesicular transport during process formation.</title>
        <authorList>
            <person name="Matsuzaki F."/>
            <person name="Shirane M."/>
            <person name="Matsumoto M."/>
            <person name="Nakayama K.I."/>
        </authorList>
    </citation>
    <scope>FUNCTION</scope>
    <scope>MUTAGENESIS OF THR-93</scope>
    <scope>INTERACTION WITH ZFYVE27; RAB11A; RAB11B; SURF4; RTN3; VAPA; VAPB AND SURF4</scope>
</reference>
<reference key="12">
    <citation type="journal article" date="2014" name="Genes Cells">
        <title>Identification and characterization of a neuron-specific isoform of protrudin.</title>
        <authorList>
            <person name="Ohnishi T."/>
            <person name="Shirane M."/>
            <person name="Hashimoto Y."/>
            <person name="Saita S."/>
            <person name="Nakayama K.I."/>
        </authorList>
    </citation>
    <scope>INTERACTION WITH ZFYVE27</scope>
</reference>
<keyword id="KW-0007">Acetylation</keyword>
<keyword id="KW-0067">ATP-binding</keyword>
<keyword id="KW-0175">Coiled coil</keyword>
<keyword id="KW-0963">Cytoplasm</keyword>
<keyword id="KW-0206">Cytoskeleton</keyword>
<keyword id="KW-0378">Hydrolase</keyword>
<keyword id="KW-0413">Isomerase</keyword>
<keyword id="KW-0493">Microtubule</keyword>
<keyword id="KW-0505">Motor protein</keyword>
<keyword id="KW-0547">Nucleotide-binding</keyword>
<keyword id="KW-0597">Phosphoprotein</keyword>
<keyword id="KW-1185">Reference proteome</keyword>
<evidence type="ECO:0000250" key="1">
    <source>
        <dbReference type="UniProtKB" id="Q12840"/>
    </source>
</evidence>
<evidence type="ECO:0000250" key="2">
    <source>
        <dbReference type="UniProtKB" id="Q6QLM7"/>
    </source>
</evidence>
<evidence type="ECO:0000255" key="3">
    <source>
        <dbReference type="PROSITE-ProRule" id="PRU00283"/>
    </source>
</evidence>
<evidence type="ECO:0000256" key="4">
    <source>
        <dbReference type="SAM" id="MobiDB-lite"/>
    </source>
</evidence>
<evidence type="ECO:0000269" key="5">
    <source>
    </source>
</evidence>
<evidence type="ECO:0000269" key="6">
    <source>
    </source>
</evidence>
<evidence type="ECO:0000269" key="7">
    <source>
    </source>
</evidence>
<evidence type="ECO:0000269" key="8">
    <source>
    </source>
</evidence>
<evidence type="ECO:0000269" key="9">
    <source>
    </source>
</evidence>
<evidence type="ECO:0000269" key="10">
    <source>
    </source>
</evidence>
<evidence type="ECO:0000305" key="11"/>
<evidence type="ECO:0007744" key="12">
    <source>
    </source>
</evidence>
<protein>
    <recommendedName>
        <fullName>Kinesin heavy chain isoform 5A</fullName>
        <ecNumber evidence="1">5.6.1.3</ecNumber>
    </recommendedName>
    <alternativeName>
        <fullName>Kinesin heavy chain neuron-specific 1</fullName>
    </alternativeName>
    <alternativeName>
        <fullName>Neuronal kinesin heavy chain</fullName>
        <shortName>NKHC</shortName>
    </alternativeName>
</protein>
<name>KIF5A_MOUSE</name>
<sequence>MAETNNECSIKVLCRFRPLNQAEILRGDKFIPIFQGDDSVIIGGKPYVFDRVFPPNTTQEQVYHACAMQIVKDVLAGYNGTIFAYGQTSSGKTHTMEGKLHDPQLMGIIPRIARDIFNHIYSMDENLEFHIKVSYFEIYLDKIRDLLDVTKTNLSVHEDKNRVPFVKGCTERFVSSPEEILDVIDEGKSNRHVAVTNMNEHSSRSHSIFLINIKQENVETEQKLSGKLYLVDLAGSEKVSKTGAEGAVLDEAKNINKSLSALGNVISALAEGTKSYVPYRDSKMTRILQDSLGGNCRTTMFICCSPSSYNDAETKSTLMFGQRAKTIKNTASVNLELTAEQWKKKYEKEKEKTKAQKETIAKLEAELSRWRNGENVPETERLAGEDSALGAELCEETPVNDNSSIVVRIAPEERQKYEEEIRRLYKQLDDKDDEINQQSQLIEKLKQQMLDQEELLVSTRGDNEKVQRELSHLQSENDAAKDEVKEVLQALEELAVNYDQKSQEVEEKSQQNQLLVDELSQKVATMLSLESELQRLQEVSGHQRKRIAEVLNGLMRDLSEFSVIVGNGEIKLPVEISGAIEEEFTVARLYISKIKSEVKSVVKRCRQLENLQVECHRKMEVTGRELSSCQLLISQHEAKIRSLTEYMQTVELKKRHLEESYDSLSDELARLQAHETVHEVALKDKEPDTQDAEEVKKALELQMENHREAHHRQLARLRDEINEKQKTIDELKDLNQKLQLELEKLQADYERLKNEENEKSAKLQELTFLYERHEQSKQDLKGLEETVARELQTLHNLRKLFVQDVTTRVKKSAEMEPEDSGGIHSQKQKISFLENNLEQLTKVHKQLVRDNADLRCELPKLEKRLRATAERVKALEGALKEAKEGAMKDKRRYQQEVDRIKEAVRYKSSGKRGHSAQIAKPVRPGHYPASSPTNPYGTRSPECISYTNNLFQNYQNLHLQAAPSSTSDMYFASSGATSVAPLASYQKANMDNGNATDINDNRSDLPCGYEAEDQAKLFPLHQETAAS</sequence>